<reference key="1">
    <citation type="journal article" date="1995" name="Genetics">
        <title>Complete sequence and gene organization of the mitochondrial genome of the land snail Albinaria coerulea.</title>
        <authorList>
            <person name="Hatzoglou E."/>
            <person name="Rodakis G.C."/>
            <person name="Lecanidou R."/>
        </authorList>
    </citation>
    <scope>NUCLEOTIDE SEQUENCE [GENOMIC DNA]</scope>
</reference>
<proteinExistence type="inferred from homology"/>
<comment type="function">
    <text evidence="1">Component of the cytochrome c oxidase, the last enzyme in the mitochondrial electron transport chain which drives oxidative phosphorylation. The respiratory chain contains 3 multisubunit complexes succinate dehydrogenase (complex II, CII), ubiquinol-cytochrome c oxidoreductase (cytochrome b-c1 complex, complex III, CIII) and cytochrome c oxidase (complex IV, CIV), that cooperate to transfer electrons derived from NADH and succinate to molecular oxygen, creating an electrochemical gradient over the inner membrane that drives transmembrane transport and the ATP synthase. Cytochrome c oxidase is the component of the respiratory chain that catalyzes the reduction of oxygen to water. Electrons originating from reduced cytochrome c in the intermembrane space (IMS) are transferred via the dinuclear copper A center (CU(A)) of subunit 2 and heme A of subunit 1 to the active site in subunit 1, a binuclear center (BNC) formed by heme A3 and copper B (CU(B)). The BNC reduces molecular oxygen to 2 water molecules using 4 electrons from cytochrome c in the IMS and 4 protons from the mitochondrial matrix.</text>
</comment>
<comment type="catalytic activity">
    <reaction evidence="1">
        <text>4 Fe(II)-[cytochrome c] + O2 + 8 H(+)(in) = 4 Fe(III)-[cytochrome c] + 2 H2O + 4 H(+)(out)</text>
        <dbReference type="Rhea" id="RHEA:11436"/>
        <dbReference type="Rhea" id="RHEA-COMP:10350"/>
        <dbReference type="Rhea" id="RHEA-COMP:14399"/>
        <dbReference type="ChEBI" id="CHEBI:15377"/>
        <dbReference type="ChEBI" id="CHEBI:15378"/>
        <dbReference type="ChEBI" id="CHEBI:15379"/>
        <dbReference type="ChEBI" id="CHEBI:29033"/>
        <dbReference type="ChEBI" id="CHEBI:29034"/>
        <dbReference type="EC" id="7.1.1.9"/>
    </reaction>
    <physiologicalReaction direction="left-to-right" evidence="1">
        <dbReference type="Rhea" id="RHEA:11437"/>
    </physiologicalReaction>
</comment>
<comment type="cofactor">
    <cofactor evidence="1">
        <name>Cu cation</name>
        <dbReference type="ChEBI" id="CHEBI:23378"/>
    </cofactor>
    <text evidence="1">Binds a dinuclear copper A center per subunit.</text>
</comment>
<comment type="subunit">
    <text evidence="1">Component of the cytochrome c oxidase (complex IV, CIV), a multisubunit enzyme composed of a catalytic core of 3 subunits and several supernumerary subunits. The complex exists as a monomer or a dimer and forms supercomplexes (SCs) in the inner mitochondrial membrane with ubiquinol-cytochrome c oxidoreductase (cytochrome b-c1 complex, complex III, CIII).</text>
</comment>
<comment type="subcellular location">
    <subcellularLocation>
        <location evidence="1">Mitochondrion inner membrane</location>
        <topology evidence="1">Multi-pass membrane protein</topology>
    </subcellularLocation>
</comment>
<comment type="similarity">
    <text evidence="3">Belongs to the cytochrome c oxidase subunit 2 family.</text>
</comment>
<keyword id="KW-0186">Copper</keyword>
<keyword id="KW-0249">Electron transport</keyword>
<keyword id="KW-0460">Magnesium</keyword>
<keyword id="KW-0472">Membrane</keyword>
<keyword id="KW-0479">Metal-binding</keyword>
<keyword id="KW-0496">Mitochondrion</keyword>
<keyword id="KW-0999">Mitochondrion inner membrane</keyword>
<keyword id="KW-0679">Respiratory chain</keyword>
<keyword id="KW-1278">Translocase</keyword>
<keyword id="KW-0812">Transmembrane</keyword>
<keyword id="KW-1133">Transmembrane helix</keyword>
<keyword id="KW-0813">Transport</keyword>
<dbReference type="EC" id="7.1.1.9"/>
<dbReference type="EMBL" id="X83390">
    <property type="protein sequence ID" value="CAA58300.1"/>
    <property type="molecule type" value="Genomic_DNA"/>
</dbReference>
<dbReference type="PIR" id="S59147">
    <property type="entry name" value="S59147"/>
</dbReference>
<dbReference type="RefSeq" id="NP_007333.1">
    <property type="nucleotide sequence ID" value="NC_001761.1"/>
</dbReference>
<dbReference type="SMR" id="P48889"/>
<dbReference type="GeneID" id="808005"/>
<dbReference type="CTD" id="4513"/>
<dbReference type="GO" id="GO:0005743">
    <property type="term" value="C:mitochondrial inner membrane"/>
    <property type="evidence" value="ECO:0007669"/>
    <property type="project" value="UniProtKB-SubCell"/>
</dbReference>
<dbReference type="GO" id="GO:0005507">
    <property type="term" value="F:copper ion binding"/>
    <property type="evidence" value="ECO:0007669"/>
    <property type="project" value="InterPro"/>
</dbReference>
<dbReference type="GO" id="GO:0004129">
    <property type="term" value="F:cytochrome-c oxidase activity"/>
    <property type="evidence" value="ECO:0007669"/>
    <property type="project" value="UniProtKB-EC"/>
</dbReference>
<dbReference type="GO" id="GO:0042773">
    <property type="term" value="P:ATP synthesis coupled electron transport"/>
    <property type="evidence" value="ECO:0007669"/>
    <property type="project" value="TreeGrafter"/>
</dbReference>
<dbReference type="CDD" id="cd13912">
    <property type="entry name" value="CcO_II_C"/>
    <property type="match status" value="1"/>
</dbReference>
<dbReference type="FunFam" id="2.60.40.420:FF:000001">
    <property type="entry name" value="Cytochrome c oxidase subunit 2"/>
    <property type="match status" value="1"/>
</dbReference>
<dbReference type="Gene3D" id="1.10.287.90">
    <property type="match status" value="1"/>
</dbReference>
<dbReference type="Gene3D" id="2.60.40.420">
    <property type="entry name" value="Cupredoxins - blue copper proteins"/>
    <property type="match status" value="1"/>
</dbReference>
<dbReference type="InterPro" id="IPR045187">
    <property type="entry name" value="CcO_II"/>
</dbReference>
<dbReference type="InterPro" id="IPR002429">
    <property type="entry name" value="CcO_II-like_C"/>
</dbReference>
<dbReference type="InterPro" id="IPR034210">
    <property type="entry name" value="CcO_II_C"/>
</dbReference>
<dbReference type="InterPro" id="IPR001505">
    <property type="entry name" value="Copper_CuA"/>
</dbReference>
<dbReference type="InterPro" id="IPR008972">
    <property type="entry name" value="Cupredoxin"/>
</dbReference>
<dbReference type="InterPro" id="IPR011759">
    <property type="entry name" value="Cyt_c_oxidase_su2_TM_dom"/>
</dbReference>
<dbReference type="InterPro" id="IPR036257">
    <property type="entry name" value="Cyt_c_oxidase_su2_TM_sf"/>
</dbReference>
<dbReference type="PANTHER" id="PTHR22888:SF9">
    <property type="entry name" value="CYTOCHROME C OXIDASE SUBUNIT 2"/>
    <property type="match status" value="1"/>
</dbReference>
<dbReference type="PANTHER" id="PTHR22888">
    <property type="entry name" value="CYTOCHROME C OXIDASE, SUBUNIT II"/>
    <property type="match status" value="1"/>
</dbReference>
<dbReference type="Pfam" id="PF00116">
    <property type="entry name" value="COX2"/>
    <property type="match status" value="1"/>
</dbReference>
<dbReference type="Pfam" id="PF02790">
    <property type="entry name" value="COX2_TM"/>
    <property type="match status" value="1"/>
</dbReference>
<dbReference type="PRINTS" id="PR01166">
    <property type="entry name" value="CYCOXIDASEII"/>
</dbReference>
<dbReference type="SUPFAM" id="SSF49503">
    <property type="entry name" value="Cupredoxins"/>
    <property type="match status" value="1"/>
</dbReference>
<dbReference type="SUPFAM" id="SSF81464">
    <property type="entry name" value="Cytochrome c oxidase subunit II-like, transmembrane region"/>
    <property type="match status" value="1"/>
</dbReference>
<dbReference type="PROSITE" id="PS00078">
    <property type="entry name" value="COX2"/>
    <property type="match status" value="1"/>
</dbReference>
<dbReference type="PROSITE" id="PS50857">
    <property type="entry name" value="COX2_CUA"/>
    <property type="match status" value="1"/>
</dbReference>
<dbReference type="PROSITE" id="PS50999">
    <property type="entry name" value="COX2_TM"/>
    <property type="match status" value="1"/>
</dbReference>
<gene>
    <name type="primary">COII</name>
</gene>
<name>COX2_ALBCA</name>
<feature type="chain" id="PRO_0000183487" description="Cytochrome c oxidase subunit 2">
    <location>
        <begin position="1"/>
        <end position="224"/>
    </location>
</feature>
<feature type="topological domain" description="Mitochondrial intermembrane" evidence="2">
    <location>
        <begin position="1"/>
        <end position="26"/>
    </location>
</feature>
<feature type="transmembrane region" description="Helical" evidence="3">
    <location>
        <begin position="27"/>
        <end position="48"/>
    </location>
</feature>
<feature type="topological domain" description="Mitochondrial matrix" evidence="2">
    <location>
        <begin position="49"/>
        <end position="62"/>
    </location>
</feature>
<feature type="transmembrane region" description="Helical" evidence="3">
    <location>
        <begin position="63"/>
        <end position="82"/>
    </location>
</feature>
<feature type="topological domain" description="Mitochondrial intermembrane" evidence="2">
    <location>
        <begin position="83"/>
        <end position="224"/>
    </location>
</feature>
<feature type="binding site" evidence="1">
    <location>
        <position position="161"/>
    </location>
    <ligand>
        <name>Cu cation</name>
        <dbReference type="ChEBI" id="CHEBI:23378"/>
        <label>A1</label>
    </ligand>
</feature>
<feature type="binding site" evidence="1">
    <location>
        <position position="196"/>
    </location>
    <ligand>
        <name>Cu cation</name>
        <dbReference type="ChEBI" id="CHEBI:23378"/>
        <label>A1</label>
    </ligand>
</feature>
<feature type="binding site" evidence="1">
    <location>
        <position position="196"/>
    </location>
    <ligand>
        <name>Cu cation</name>
        <dbReference type="ChEBI" id="CHEBI:23378"/>
        <label>A2</label>
    </ligand>
</feature>
<feature type="binding site" evidence="1">
    <location>
        <position position="198"/>
    </location>
    <ligand>
        <name>Cu cation</name>
        <dbReference type="ChEBI" id="CHEBI:23378"/>
        <label>A2</label>
    </ligand>
</feature>
<feature type="binding site" evidence="1">
    <location>
        <position position="198"/>
    </location>
    <ligand>
        <name>Mg(2+)</name>
        <dbReference type="ChEBI" id="CHEBI:18420"/>
        <note>ligand shared with subunit 1</note>
    </ligand>
</feature>
<feature type="binding site" evidence="1">
    <location>
        <position position="200"/>
    </location>
    <ligand>
        <name>Cu cation</name>
        <dbReference type="ChEBI" id="CHEBI:23378"/>
        <label>A1</label>
    </ligand>
</feature>
<feature type="binding site" evidence="1">
    <location>
        <position position="200"/>
    </location>
    <ligand>
        <name>Cu cation</name>
        <dbReference type="ChEBI" id="CHEBI:23378"/>
        <label>A2</label>
    </ligand>
</feature>
<feature type="binding site" evidence="1">
    <location>
        <position position="204"/>
    </location>
    <ligand>
        <name>Cu cation</name>
        <dbReference type="ChEBI" id="CHEBI:23378"/>
        <label>A2</label>
    </ligand>
</feature>
<feature type="binding site" evidence="1">
    <location>
        <position position="207"/>
    </location>
    <ligand>
        <name>Cu cation</name>
        <dbReference type="ChEBI" id="CHEBI:23378"/>
        <label>A1</label>
    </ligand>
</feature>
<protein>
    <recommendedName>
        <fullName>Cytochrome c oxidase subunit 2</fullName>
        <ecNumber>7.1.1.9</ecNumber>
    </recommendedName>
    <alternativeName>
        <fullName>Cytochrome c oxidase polypeptide II</fullName>
    </alternativeName>
</protein>
<organism>
    <name type="scientific">Albinaria caerulea</name>
    <name type="common">Land snail</name>
    <dbReference type="NCBI Taxonomy" id="42349"/>
    <lineage>
        <taxon>Eukaryota</taxon>
        <taxon>Metazoa</taxon>
        <taxon>Spiralia</taxon>
        <taxon>Lophotrochozoa</taxon>
        <taxon>Mollusca</taxon>
        <taxon>Gastropoda</taxon>
        <taxon>Heterobranchia</taxon>
        <taxon>Euthyneura</taxon>
        <taxon>Panpulmonata</taxon>
        <taxon>Eupulmonata</taxon>
        <taxon>Stylommatophora</taxon>
        <taxon>Helicina</taxon>
        <taxon>Clausilioidea</taxon>
        <taxon>Clausiliidae</taxon>
        <taxon>Alopiinae</taxon>
        <taxon>Albinaria</taxon>
    </lineage>
</organism>
<geneLocation type="mitochondrion"/>
<evidence type="ECO:0000250" key="1">
    <source>
        <dbReference type="UniProtKB" id="P00410"/>
    </source>
</evidence>
<evidence type="ECO:0000255" key="2"/>
<evidence type="ECO:0000305" key="3"/>
<accession>P48889</accession>
<sequence length="224" mass="25247">MSTWGQINLMDPASPIQMEMMLFHDHAMAILIGIFTLVSLLGVKLCFNTLSTRTMHEAQLLETLWTILPAFLLVWLALPSLRLLYLLDEQGSEGIILKAIGHQWYWSYEMPSMNISNFDSYMIPEEDLKPGDYRLLEVDNRPMVPYGLDINVITTSADVIHAWALPSMGVKMDAVPGRLNSMGFHANLPGIYYGQCSEICGANHSFMPITVEAIDVKDFIKMCN</sequence>